<organism>
    <name type="scientific">Coxiella burnetii (strain RSA 331 / Henzerling II)</name>
    <dbReference type="NCBI Taxonomy" id="360115"/>
    <lineage>
        <taxon>Bacteria</taxon>
        <taxon>Pseudomonadati</taxon>
        <taxon>Pseudomonadota</taxon>
        <taxon>Gammaproteobacteria</taxon>
        <taxon>Legionellales</taxon>
        <taxon>Coxiellaceae</taxon>
        <taxon>Coxiella</taxon>
    </lineage>
</organism>
<feature type="chain" id="PRO_1000080006" description="tRNA modification GTPase MnmE">
    <location>
        <begin position="1"/>
        <end position="452"/>
    </location>
</feature>
<feature type="domain" description="TrmE-type G">
    <location>
        <begin position="216"/>
        <end position="375"/>
    </location>
</feature>
<feature type="binding site" evidence="1">
    <location>
        <position position="25"/>
    </location>
    <ligand>
        <name>(6S)-5-formyl-5,6,7,8-tetrahydrofolate</name>
        <dbReference type="ChEBI" id="CHEBI:57457"/>
    </ligand>
</feature>
<feature type="binding site" evidence="1">
    <location>
        <position position="81"/>
    </location>
    <ligand>
        <name>(6S)-5-formyl-5,6,7,8-tetrahydrofolate</name>
        <dbReference type="ChEBI" id="CHEBI:57457"/>
    </ligand>
</feature>
<feature type="binding site" evidence="1">
    <location>
        <position position="120"/>
    </location>
    <ligand>
        <name>(6S)-5-formyl-5,6,7,8-tetrahydrofolate</name>
        <dbReference type="ChEBI" id="CHEBI:57457"/>
    </ligand>
</feature>
<feature type="binding site" evidence="1">
    <location>
        <begin position="226"/>
        <end position="231"/>
    </location>
    <ligand>
        <name>GTP</name>
        <dbReference type="ChEBI" id="CHEBI:37565"/>
    </ligand>
</feature>
<feature type="binding site" evidence="1">
    <location>
        <position position="226"/>
    </location>
    <ligand>
        <name>K(+)</name>
        <dbReference type="ChEBI" id="CHEBI:29103"/>
    </ligand>
</feature>
<feature type="binding site" evidence="1">
    <location>
        <position position="230"/>
    </location>
    <ligand>
        <name>Mg(2+)</name>
        <dbReference type="ChEBI" id="CHEBI:18420"/>
    </ligand>
</feature>
<feature type="binding site" evidence="1">
    <location>
        <begin position="245"/>
        <end position="251"/>
    </location>
    <ligand>
        <name>GTP</name>
        <dbReference type="ChEBI" id="CHEBI:37565"/>
    </ligand>
</feature>
<feature type="binding site" evidence="1">
    <location>
        <position position="245"/>
    </location>
    <ligand>
        <name>K(+)</name>
        <dbReference type="ChEBI" id="CHEBI:29103"/>
    </ligand>
</feature>
<feature type="binding site" evidence="1">
    <location>
        <position position="247"/>
    </location>
    <ligand>
        <name>K(+)</name>
        <dbReference type="ChEBI" id="CHEBI:29103"/>
    </ligand>
</feature>
<feature type="binding site" evidence="1">
    <location>
        <position position="250"/>
    </location>
    <ligand>
        <name>K(+)</name>
        <dbReference type="ChEBI" id="CHEBI:29103"/>
    </ligand>
</feature>
<feature type="binding site" evidence="1">
    <location>
        <position position="251"/>
    </location>
    <ligand>
        <name>Mg(2+)</name>
        <dbReference type="ChEBI" id="CHEBI:18420"/>
    </ligand>
</feature>
<feature type="binding site" evidence="1">
    <location>
        <begin position="270"/>
        <end position="273"/>
    </location>
    <ligand>
        <name>GTP</name>
        <dbReference type="ChEBI" id="CHEBI:37565"/>
    </ligand>
</feature>
<feature type="binding site" evidence="1">
    <location>
        <position position="452"/>
    </location>
    <ligand>
        <name>(6S)-5-formyl-5,6,7,8-tetrahydrofolate</name>
        <dbReference type="ChEBI" id="CHEBI:57457"/>
    </ligand>
</feature>
<protein>
    <recommendedName>
        <fullName evidence="1">tRNA modification GTPase MnmE</fullName>
        <ecNumber evidence="1">3.6.-.-</ecNumber>
    </recommendedName>
</protein>
<comment type="function">
    <text evidence="1">Exhibits a very high intrinsic GTPase hydrolysis rate. Involved in the addition of a carboxymethylaminomethyl (cmnm) group at the wobble position (U34) of certain tRNAs, forming tRNA-cmnm(5)s(2)U34.</text>
</comment>
<comment type="cofactor">
    <cofactor evidence="1">
        <name>K(+)</name>
        <dbReference type="ChEBI" id="CHEBI:29103"/>
    </cofactor>
    <text evidence="1">Binds 1 potassium ion per subunit.</text>
</comment>
<comment type="subunit">
    <text evidence="1">Homodimer. Heterotetramer of two MnmE and two MnmG subunits.</text>
</comment>
<comment type="subcellular location">
    <subcellularLocation>
        <location evidence="1">Cytoplasm</location>
    </subcellularLocation>
</comment>
<comment type="similarity">
    <text evidence="1">Belongs to the TRAFAC class TrmE-Era-EngA-EngB-Septin-like GTPase superfamily. TrmE GTPase family.</text>
</comment>
<gene>
    <name evidence="1" type="primary">mnmE</name>
    <name evidence="1" type="synonym">trmE</name>
    <name type="ordered locus">COXBURSA331_A2124</name>
</gene>
<keyword id="KW-0963">Cytoplasm</keyword>
<keyword id="KW-0342">GTP-binding</keyword>
<keyword id="KW-0378">Hydrolase</keyword>
<keyword id="KW-0460">Magnesium</keyword>
<keyword id="KW-0479">Metal-binding</keyword>
<keyword id="KW-0547">Nucleotide-binding</keyword>
<keyword id="KW-0630">Potassium</keyword>
<keyword id="KW-0819">tRNA processing</keyword>
<sequence length="452" mass="49731">MTYVFPETIAAQATPSGRGGIGVVRVSGEKTKAIAQKILGCVPKPRYATFVKFRDSGSVIDEGIALYFPKPNSFTGEDVLELHGHGGPVVMDRLLNTVLKAGARQARPGEFSERAFLNNKIDLAQAEAVADLINASSEQAARSAMRSLQGEFSKRIHQLVDALIQLRMYIEASIDFPEEEIDFLADERIKETLENLTHQVQEIEKTAKQGALLREGITVVIAGEPNVGKSSLLNLLSGQETAIVTDIAGTTRDIIRESIHIDGLPIHVVDTAGLRLTEDVVEKEGVRRTQKAVQQADLLLLMIDASKPTEDFKKIIAQWFSENDNKIPTLIVENKIDLIGEAPRKENKEYPHIKLSVKTRAGVELLKNHLKNTAGFEATHENNFIARRRHCDAIARASAFLKNANNHLLNQKAGELVAEDLKLAQNALSEITGEFTSDDLLGKIFSEFCIGK</sequence>
<dbReference type="EC" id="3.6.-.-" evidence="1"/>
<dbReference type="EMBL" id="CP000890">
    <property type="protein sequence ID" value="ABX77598.1"/>
    <property type="molecule type" value="Genomic_DNA"/>
</dbReference>
<dbReference type="SMR" id="A9NBA7"/>
<dbReference type="KEGG" id="cbs:COXBURSA331_A2124"/>
<dbReference type="HOGENOM" id="CLU_019624_4_1_6"/>
<dbReference type="GO" id="GO:0005829">
    <property type="term" value="C:cytosol"/>
    <property type="evidence" value="ECO:0007669"/>
    <property type="project" value="TreeGrafter"/>
</dbReference>
<dbReference type="GO" id="GO:0005525">
    <property type="term" value="F:GTP binding"/>
    <property type="evidence" value="ECO:0007669"/>
    <property type="project" value="UniProtKB-UniRule"/>
</dbReference>
<dbReference type="GO" id="GO:0003924">
    <property type="term" value="F:GTPase activity"/>
    <property type="evidence" value="ECO:0007669"/>
    <property type="project" value="UniProtKB-UniRule"/>
</dbReference>
<dbReference type="GO" id="GO:0046872">
    <property type="term" value="F:metal ion binding"/>
    <property type="evidence" value="ECO:0007669"/>
    <property type="project" value="UniProtKB-KW"/>
</dbReference>
<dbReference type="GO" id="GO:0030488">
    <property type="term" value="P:tRNA methylation"/>
    <property type="evidence" value="ECO:0007669"/>
    <property type="project" value="TreeGrafter"/>
</dbReference>
<dbReference type="GO" id="GO:0002098">
    <property type="term" value="P:tRNA wobble uridine modification"/>
    <property type="evidence" value="ECO:0007669"/>
    <property type="project" value="TreeGrafter"/>
</dbReference>
<dbReference type="CDD" id="cd04164">
    <property type="entry name" value="trmE"/>
    <property type="match status" value="1"/>
</dbReference>
<dbReference type="CDD" id="cd14858">
    <property type="entry name" value="TrmE_N"/>
    <property type="match status" value="1"/>
</dbReference>
<dbReference type="FunFam" id="3.30.1360.120:FF:000001">
    <property type="entry name" value="tRNA modification GTPase MnmE"/>
    <property type="match status" value="1"/>
</dbReference>
<dbReference type="FunFam" id="3.40.50.300:FF:000249">
    <property type="entry name" value="tRNA modification GTPase MnmE"/>
    <property type="match status" value="1"/>
</dbReference>
<dbReference type="Gene3D" id="3.40.50.300">
    <property type="entry name" value="P-loop containing nucleotide triphosphate hydrolases"/>
    <property type="match status" value="1"/>
</dbReference>
<dbReference type="Gene3D" id="3.30.1360.120">
    <property type="entry name" value="Probable tRNA modification gtpase trme, domain 1"/>
    <property type="match status" value="1"/>
</dbReference>
<dbReference type="Gene3D" id="1.20.120.430">
    <property type="entry name" value="tRNA modification GTPase MnmE domain 2"/>
    <property type="match status" value="1"/>
</dbReference>
<dbReference type="HAMAP" id="MF_00379">
    <property type="entry name" value="GTPase_MnmE"/>
    <property type="match status" value="1"/>
</dbReference>
<dbReference type="InterPro" id="IPR031168">
    <property type="entry name" value="G_TrmE"/>
</dbReference>
<dbReference type="InterPro" id="IPR006073">
    <property type="entry name" value="GTP-bd"/>
</dbReference>
<dbReference type="InterPro" id="IPR018948">
    <property type="entry name" value="GTP-bd_TrmE_N"/>
</dbReference>
<dbReference type="InterPro" id="IPR004520">
    <property type="entry name" value="GTPase_MnmE"/>
</dbReference>
<dbReference type="InterPro" id="IPR027368">
    <property type="entry name" value="MnmE_dom2"/>
</dbReference>
<dbReference type="InterPro" id="IPR025867">
    <property type="entry name" value="MnmE_helical"/>
</dbReference>
<dbReference type="InterPro" id="IPR027417">
    <property type="entry name" value="P-loop_NTPase"/>
</dbReference>
<dbReference type="InterPro" id="IPR005225">
    <property type="entry name" value="Small_GTP-bd"/>
</dbReference>
<dbReference type="InterPro" id="IPR027266">
    <property type="entry name" value="TrmE/GcvT_dom1"/>
</dbReference>
<dbReference type="NCBIfam" id="TIGR00450">
    <property type="entry name" value="mnmE_trmE_thdF"/>
    <property type="match status" value="1"/>
</dbReference>
<dbReference type="NCBIfam" id="NF003661">
    <property type="entry name" value="PRK05291.1-3"/>
    <property type="match status" value="1"/>
</dbReference>
<dbReference type="NCBIfam" id="TIGR00231">
    <property type="entry name" value="small_GTP"/>
    <property type="match status" value="1"/>
</dbReference>
<dbReference type="PANTHER" id="PTHR42714">
    <property type="entry name" value="TRNA MODIFICATION GTPASE GTPBP3"/>
    <property type="match status" value="1"/>
</dbReference>
<dbReference type="PANTHER" id="PTHR42714:SF2">
    <property type="entry name" value="TRNA MODIFICATION GTPASE GTPBP3, MITOCHONDRIAL"/>
    <property type="match status" value="1"/>
</dbReference>
<dbReference type="Pfam" id="PF01926">
    <property type="entry name" value="MMR_HSR1"/>
    <property type="match status" value="1"/>
</dbReference>
<dbReference type="Pfam" id="PF12631">
    <property type="entry name" value="MnmE_helical"/>
    <property type="match status" value="1"/>
</dbReference>
<dbReference type="Pfam" id="PF10396">
    <property type="entry name" value="TrmE_N"/>
    <property type="match status" value="1"/>
</dbReference>
<dbReference type="PRINTS" id="PR00326">
    <property type="entry name" value="GTP1OBG"/>
</dbReference>
<dbReference type="SUPFAM" id="SSF52540">
    <property type="entry name" value="P-loop containing nucleoside triphosphate hydrolases"/>
    <property type="match status" value="1"/>
</dbReference>
<dbReference type="SUPFAM" id="SSF116878">
    <property type="entry name" value="TrmE connector domain"/>
    <property type="match status" value="1"/>
</dbReference>
<dbReference type="PROSITE" id="PS51709">
    <property type="entry name" value="G_TRME"/>
    <property type="match status" value="1"/>
</dbReference>
<name>MNME_COXBR</name>
<reference key="1">
    <citation type="submission" date="2007-11" db="EMBL/GenBank/DDBJ databases">
        <title>Genome sequencing of phylogenetically and phenotypically diverse Coxiella burnetii isolates.</title>
        <authorList>
            <person name="Seshadri R."/>
            <person name="Samuel J.E."/>
        </authorList>
    </citation>
    <scope>NUCLEOTIDE SEQUENCE [LARGE SCALE GENOMIC DNA]</scope>
    <source>
        <strain>RSA 331 / Henzerling II</strain>
    </source>
</reference>
<proteinExistence type="inferred from homology"/>
<evidence type="ECO:0000255" key="1">
    <source>
        <dbReference type="HAMAP-Rule" id="MF_00379"/>
    </source>
</evidence>
<accession>A9NBA7</accession>